<evidence type="ECO:0000250" key="1"/>
<evidence type="ECO:0000255" key="2">
    <source>
        <dbReference type="HAMAP-Rule" id="MF_01208"/>
    </source>
</evidence>
<gene>
    <name evidence="2" type="primary">pyrE</name>
    <name type="ordered locus">Z5066</name>
    <name type="ordered locus">ECs4517</name>
</gene>
<sequence length="213" mass="23537">MKPYQRQFIEFALGKQVLKFGEFTLKSGRKSPYFFNAGLFNTGRDLALLGRFYAEALVDSGLEFDLLFGPAYKGIPIATTTAVALAEHHDLDLPYCFNRKEAKDHGEGGNLVGSALQGRVMLVDDVITAGTAIRESMEIIQANGATLAGVLISLDRQERGRGEISAIQEVERDYNCKVISIITLKDLIAYLEEKPEMAEHLAAVKAYREEFGV</sequence>
<proteinExistence type="inferred from homology"/>
<keyword id="KW-0328">Glycosyltransferase</keyword>
<keyword id="KW-0460">Magnesium</keyword>
<keyword id="KW-0665">Pyrimidine biosynthesis</keyword>
<keyword id="KW-1185">Reference proteome</keyword>
<keyword id="KW-0808">Transferase</keyword>
<organism>
    <name type="scientific">Escherichia coli O157:H7</name>
    <dbReference type="NCBI Taxonomy" id="83334"/>
    <lineage>
        <taxon>Bacteria</taxon>
        <taxon>Pseudomonadati</taxon>
        <taxon>Pseudomonadota</taxon>
        <taxon>Gammaproteobacteria</taxon>
        <taxon>Enterobacterales</taxon>
        <taxon>Enterobacteriaceae</taxon>
        <taxon>Escherichia</taxon>
    </lineage>
</organism>
<accession>Q8XD99</accession>
<feature type="initiator methionine" description="Removed" evidence="1">
    <location>
        <position position="1"/>
    </location>
</feature>
<feature type="chain" id="PRO_0000110695" description="Orotate phosphoribosyltransferase">
    <location>
        <begin position="2"/>
        <end position="213"/>
    </location>
</feature>
<feature type="binding site" description="in other chain" evidence="2">
    <location>
        <position position="26"/>
    </location>
    <ligand>
        <name>5-phospho-alpha-D-ribose 1-diphosphate</name>
        <dbReference type="ChEBI" id="CHEBI:58017"/>
        <note>ligand shared between dimeric partners</note>
    </ligand>
</feature>
<feature type="binding site" evidence="2">
    <location>
        <begin position="34"/>
        <end position="35"/>
    </location>
    <ligand>
        <name>orotate</name>
        <dbReference type="ChEBI" id="CHEBI:30839"/>
    </ligand>
</feature>
<feature type="binding site" description="in other chain" evidence="2">
    <location>
        <begin position="72"/>
        <end position="73"/>
    </location>
    <ligand>
        <name>5-phospho-alpha-D-ribose 1-diphosphate</name>
        <dbReference type="ChEBI" id="CHEBI:58017"/>
        <note>ligand shared between dimeric partners</note>
    </ligand>
</feature>
<feature type="binding site" evidence="2">
    <location>
        <position position="99"/>
    </location>
    <ligand>
        <name>5-phospho-alpha-D-ribose 1-diphosphate</name>
        <dbReference type="ChEBI" id="CHEBI:58017"/>
        <note>ligand shared between dimeric partners</note>
    </ligand>
</feature>
<feature type="binding site" description="in other chain" evidence="2">
    <location>
        <position position="100"/>
    </location>
    <ligand>
        <name>5-phospho-alpha-D-ribose 1-diphosphate</name>
        <dbReference type="ChEBI" id="CHEBI:58017"/>
        <note>ligand shared between dimeric partners</note>
    </ligand>
</feature>
<feature type="binding site" evidence="2">
    <location>
        <position position="103"/>
    </location>
    <ligand>
        <name>5-phospho-alpha-D-ribose 1-diphosphate</name>
        <dbReference type="ChEBI" id="CHEBI:58017"/>
        <note>ligand shared between dimeric partners</note>
    </ligand>
</feature>
<feature type="binding site" evidence="2">
    <location>
        <position position="105"/>
    </location>
    <ligand>
        <name>5-phospho-alpha-D-ribose 1-diphosphate</name>
        <dbReference type="ChEBI" id="CHEBI:58017"/>
        <note>ligand shared between dimeric partners</note>
    </ligand>
</feature>
<feature type="binding site" description="in other chain" evidence="2">
    <location>
        <begin position="124"/>
        <end position="132"/>
    </location>
    <ligand>
        <name>5-phospho-alpha-D-ribose 1-diphosphate</name>
        <dbReference type="ChEBI" id="CHEBI:58017"/>
        <note>ligand shared between dimeric partners</note>
    </ligand>
</feature>
<feature type="binding site" evidence="2">
    <location>
        <position position="128"/>
    </location>
    <ligand>
        <name>orotate</name>
        <dbReference type="ChEBI" id="CHEBI:30839"/>
    </ligand>
</feature>
<feature type="binding site" evidence="2">
    <location>
        <position position="156"/>
    </location>
    <ligand>
        <name>orotate</name>
        <dbReference type="ChEBI" id="CHEBI:30839"/>
    </ligand>
</feature>
<comment type="function">
    <text evidence="2">Catalyzes the transfer of a ribosyl phosphate group from 5-phosphoribose 1-diphosphate to orotate, leading to the formation of orotidine monophosphate (OMP).</text>
</comment>
<comment type="catalytic activity">
    <reaction evidence="2">
        <text>orotidine 5'-phosphate + diphosphate = orotate + 5-phospho-alpha-D-ribose 1-diphosphate</text>
        <dbReference type="Rhea" id="RHEA:10380"/>
        <dbReference type="ChEBI" id="CHEBI:30839"/>
        <dbReference type="ChEBI" id="CHEBI:33019"/>
        <dbReference type="ChEBI" id="CHEBI:57538"/>
        <dbReference type="ChEBI" id="CHEBI:58017"/>
        <dbReference type="EC" id="2.4.2.10"/>
    </reaction>
</comment>
<comment type="cofactor">
    <cofactor evidence="2">
        <name>Mg(2+)</name>
        <dbReference type="ChEBI" id="CHEBI:18420"/>
    </cofactor>
</comment>
<comment type="pathway">
    <text evidence="2">Pyrimidine metabolism; UMP biosynthesis via de novo pathway; UMP from orotate: step 1/2.</text>
</comment>
<comment type="subunit">
    <text evidence="2">Homodimer.</text>
</comment>
<comment type="similarity">
    <text evidence="2">Belongs to the purine/pyrimidine phosphoribosyltransferase family. PyrE subfamily.</text>
</comment>
<dbReference type="EC" id="2.4.2.10" evidence="2"/>
<dbReference type="EMBL" id="AE005174">
    <property type="protein sequence ID" value="AAG58786.1"/>
    <property type="molecule type" value="Genomic_DNA"/>
</dbReference>
<dbReference type="EMBL" id="BA000007">
    <property type="protein sequence ID" value="BAB37940.1"/>
    <property type="molecule type" value="Genomic_DNA"/>
</dbReference>
<dbReference type="PIR" id="E91193">
    <property type="entry name" value="E91193"/>
</dbReference>
<dbReference type="PIR" id="F86040">
    <property type="entry name" value="F86040"/>
</dbReference>
<dbReference type="RefSeq" id="NP_312544.1">
    <property type="nucleotide sequence ID" value="NC_002695.1"/>
</dbReference>
<dbReference type="RefSeq" id="WP_000806161.1">
    <property type="nucleotide sequence ID" value="NZ_VOAI01000021.1"/>
</dbReference>
<dbReference type="SMR" id="Q8XD99"/>
<dbReference type="STRING" id="155864.Z5066"/>
<dbReference type="GeneID" id="915528"/>
<dbReference type="KEGG" id="ece:Z5066"/>
<dbReference type="KEGG" id="ecs:ECs_4517"/>
<dbReference type="PATRIC" id="fig|386585.9.peg.4733"/>
<dbReference type="eggNOG" id="COG0461">
    <property type="taxonomic scope" value="Bacteria"/>
</dbReference>
<dbReference type="HOGENOM" id="CLU_074878_0_1_6"/>
<dbReference type="OMA" id="SPFFMNA"/>
<dbReference type="UniPathway" id="UPA00070">
    <property type="reaction ID" value="UER00119"/>
</dbReference>
<dbReference type="Proteomes" id="UP000000558">
    <property type="component" value="Chromosome"/>
</dbReference>
<dbReference type="Proteomes" id="UP000002519">
    <property type="component" value="Chromosome"/>
</dbReference>
<dbReference type="GO" id="GO:0005737">
    <property type="term" value="C:cytoplasm"/>
    <property type="evidence" value="ECO:0007669"/>
    <property type="project" value="TreeGrafter"/>
</dbReference>
<dbReference type="GO" id="GO:0000287">
    <property type="term" value="F:magnesium ion binding"/>
    <property type="evidence" value="ECO:0007669"/>
    <property type="project" value="UniProtKB-UniRule"/>
</dbReference>
<dbReference type="GO" id="GO:0004588">
    <property type="term" value="F:orotate phosphoribosyltransferase activity"/>
    <property type="evidence" value="ECO:0007669"/>
    <property type="project" value="UniProtKB-UniRule"/>
</dbReference>
<dbReference type="GO" id="GO:0006207">
    <property type="term" value="P:'de novo' pyrimidine nucleobase biosynthetic process"/>
    <property type="evidence" value="ECO:0007669"/>
    <property type="project" value="TreeGrafter"/>
</dbReference>
<dbReference type="GO" id="GO:0044205">
    <property type="term" value="P:'de novo' UMP biosynthetic process"/>
    <property type="evidence" value="ECO:0007669"/>
    <property type="project" value="UniProtKB-UniRule"/>
</dbReference>
<dbReference type="GO" id="GO:0046132">
    <property type="term" value="P:pyrimidine ribonucleoside biosynthetic process"/>
    <property type="evidence" value="ECO:0007669"/>
    <property type="project" value="TreeGrafter"/>
</dbReference>
<dbReference type="CDD" id="cd06223">
    <property type="entry name" value="PRTases_typeI"/>
    <property type="match status" value="1"/>
</dbReference>
<dbReference type="FunFam" id="3.40.50.2020:FF:000008">
    <property type="entry name" value="Orotate phosphoribosyltransferase"/>
    <property type="match status" value="1"/>
</dbReference>
<dbReference type="Gene3D" id="3.40.50.2020">
    <property type="match status" value="1"/>
</dbReference>
<dbReference type="HAMAP" id="MF_01208">
    <property type="entry name" value="PyrE"/>
    <property type="match status" value="1"/>
</dbReference>
<dbReference type="InterPro" id="IPR023031">
    <property type="entry name" value="OPRT"/>
</dbReference>
<dbReference type="InterPro" id="IPR004467">
    <property type="entry name" value="Or_phspho_trans_dom"/>
</dbReference>
<dbReference type="InterPro" id="IPR000836">
    <property type="entry name" value="PRibTrfase_dom"/>
</dbReference>
<dbReference type="InterPro" id="IPR029057">
    <property type="entry name" value="PRTase-like"/>
</dbReference>
<dbReference type="NCBIfam" id="TIGR00336">
    <property type="entry name" value="pyrE"/>
    <property type="match status" value="1"/>
</dbReference>
<dbReference type="PANTHER" id="PTHR46683">
    <property type="entry name" value="OROTATE PHOSPHORIBOSYLTRANSFERASE 1-RELATED"/>
    <property type="match status" value="1"/>
</dbReference>
<dbReference type="PANTHER" id="PTHR46683:SF1">
    <property type="entry name" value="OROTATE PHOSPHORIBOSYLTRANSFERASE 1-RELATED"/>
    <property type="match status" value="1"/>
</dbReference>
<dbReference type="Pfam" id="PF00156">
    <property type="entry name" value="Pribosyltran"/>
    <property type="match status" value="1"/>
</dbReference>
<dbReference type="SUPFAM" id="SSF53271">
    <property type="entry name" value="PRTase-like"/>
    <property type="match status" value="1"/>
</dbReference>
<dbReference type="PROSITE" id="PS00103">
    <property type="entry name" value="PUR_PYR_PR_TRANSFER"/>
    <property type="match status" value="1"/>
</dbReference>
<protein>
    <recommendedName>
        <fullName evidence="2">Orotate phosphoribosyltransferase</fullName>
        <shortName evidence="2">OPRT</shortName>
        <shortName evidence="2">OPRTase</shortName>
        <ecNumber evidence="2">2.4.2.10</ecNumber>
    </recommendedName>
</protein>
<name>PYRE_ECO57</name>
<reference key="1">
    <citation type="journal article" date="2001" name="Nature">
        <title>Genome sequence of enterohaemorrhagic Escherichia coli O157:H7.</title>
        <authorList>
            <person name="Perna N.T."/>
            <person name="Plunkett G. III"/>
            <person name="Burland V."/>
            <person name="Mau B."/>
            <person name="Glasner J.D."/>
            <person name="Rose D.J."/>
            <person name="Mayhew G.F."/>
            <person name="Evans P.S."/>
            <person name="Gregor J."/>
            <person name="Kirkpatrick H.A."/>
            <person name="Posfai G."/>
            <person name="Hackett J."/>
            <person name="Klink S."/>
            <person name="Boutin A."/>
            <person name="Shao Y."/>
            <person name="Miller L."/>
            <person name="Grotbeck E.J."/>
            <person name="Davis N.W."/>
            <person name="Lim A."/>
            <person name="Dimalanta E.T."/>
            <person name="Potamousis K."/>
            <person name="Apodaca J."/>
            <person name="Anantharaman T.S."/>
            <person name="Lin J."/>
            <person name="Yen G."/>
            <person name="Schwartz D.C."/>
            <person name="Welch R.A."/>
            <person name="Blattner F.R."/>
        </authorList>
    </citation>
    <scope>NUCLEOTIDE SEQUENCE [LARGE SCALE GENOMIC DNA]</scope>
    <source>
        <strain>O157:H7 / EDL933 / ATCC 700927 / EHEC</strain>
    </source>
</reference>
<reference key="2">
    <citation type="journal article" date="2001" name="DNA Res.">
        <title>Complete genome sequence of enterohemorrhagic Escherichia coli O157:H7 and genomic comparison with a laboratory strain K-12.</title>
        <authorList>
            <person name="Hayashi T."/>
            <person name="Makino K."/>
            <person name="Ohnishi M."/>
            <person name="Kurokawa K."/>
            <person name="Ishii K."/>
            <person name="Yokoyama K."/>
            <person name="Han C.-G."/>
            <person name="Ohtsubo E."/>
            <person name="Nakayama K."/>
            <person name="Murata T."/>
            <person name="Tanaka M."/>
            <person name="Tobe T."/>
            <person name="Iida T."/>
            <person name="Takami H."/>
            <person name="Honda T."/>
            <person name="Sasakawa C."/>
            <person name="Ogasawara N."/>
            <person name="Yasunaga T."/>
            <person name="Kuhara S."/>
            <person name="Shiba T."/>
            <person name="Hattori M."/>
            <person name="Shinagawa H."/>
        </authorList>
    </citation>
    <scope>NUCLEOTIDE SEQUENCE [LARGE SCALE GENOMIC DNA]</scope>
    <source>
        <strain>O157:H7 / Sakai / RIMD 0509952 / EHEC</strain>
    </source>
</reference>